<protein>
    <recommendedName>
        <fullName>Uncharacterized protein L737</fullName>
    </recommendedName>
</protein>
<dbReference type="EMBL" id="AY653733">
    <property type="protein sequence ID" value="AAV50997.1"/>
    <property type="molecule type" value="Genomic_DNA"/>
</dbReference>
<dbReference type="KEGG" id="vg:9925393"/>
<dbReference type="OrthoDB" id="31892at10239"/>
<dbReference type="Proteomes" id="UP000001134">
    <property type="component" value="Genome"/>
</dbReference>
<dbReference type="InterPro" id="IPR045327">
    <property type="entry name" value="DUF5881"/>
</dbReference>
<dbReference type="Pfam" id="PF19228">
    <property type="entry name" value="DUF5881"/>
    <property type="match status" value="1"/>
</dbReference>
<accession>Q5UNY7</accession>
<feature type="signal peptide" evidence="1">
    <location>
        <begin position="1"/>
        <end position="26"/>
    </location>
</feature>
<feature type="chain" id="PRO_0000253292" description="Uncharacterized protein L737">
    <location>
        <begin position="27"/>
        <end position="248"/>
    </location>
</feature>
<reference key="1">
    <citation type="journal article" date="2004" name="Science">
        <title>The 1.2-megabase genome sequence of Mimivirus.</title>
        <authorList>
            <person name="Raoult D."/>
            <person name="Audic S."/>
            <person name="Robert C."/>
            <person name="Abergel C."/>
            <person name="Renesto P."/>
            <person name="Ogata H."/>
            <person name="La Scola B."/>
            <person name="Susan M."/>
            <person name="Claverie J.-M."/>
        </authorList>
    </citation>
    <scope>NUCLEOTIDE SEQUENCE [LARGE SCALE GENOMIC DNA]</scope>
    <source>
        <strain>Rowbotham-Bradford</strain>
    </source>
</reference>
<name>YL737_MIMIV</name>
<organism>
    <name type="scientific">Acanthamoeba polyphaga mimivirus</name>
    <name type="common">APMV</name>
    <dbReference type="NCBI Taxonomy" id="212035"/>
    <lineage>
        <taxon>Viruses</taxon>
        <taxon>Varidnaviria</taxon>
        <taxon>Bamfordvirae</taxon>
        <taxon>Nucleocytoviricota</taxon>
        <taxon>Megaviricetes</taxon>
        <taxon>Imitervirales</taxon>
        <taxon>Mimiviridae</taxon>
        <taxon>Megamimivirinae</taxon>
        <taxon>Mimivirus</taxon>
        <taxon>Mimivirus bradfordmassiliense</taxon>
    </lineage>
</organism>
<organismHost>
    <name type="scientific">Acanthamoeba polyphaga</name>
    <name type="common">Amoeba</name>
    <dbReference type="NCBI Taxonomy" id="5757"/>
</organismHost>
<evidence type="ECO:0000255" key="1"/>
<gene>
    <name type="ordered locus">MIMI_L737</name>
</gene>
<keyword id="KW-1185">Reference proteome</keyword>
<keyword id="KW-0732">Signal</keyword>
<sequence>MVAPRISPKIVLVGFALFAIISASLAFPSGLNCPDPKPYPKFFLDSLWSGPSGYLGTTLIQGYVMIDTTGEFDFAKVASINGTFLQYYSKVLGTYVSEMYINLFGQQVKVMEAPFTLLERNPFNRFGEYCMVSNPRSVMPGYVEGLPITNKFFYNTYYNDTHGKSFGNVEQSEYFFFDETRNNSINCLTEFNPDATIKTFTCYKFQKVSNNVIPPTSKRSIEDMDSLRIGGLDLPEELVAPKYRHYFK</sequence>
<proteinExistence type="inferred from homology"/>